<accession>A8A731</accession>
<evidence type="ECO:0000255" key="1">
    <source>
        <dbReference type="HAMAP-Rule" id="MF_00186"/>
    </source>
</evidence>
<comment type="function">
    <text evidence="1">Key enzyme in the regulation of glycerol uptake and metabolism. Catalyzes the phosphorylation of glycerol to yield sn-glycerol 3-phosphate.</text>
</comment>
<comment type="catalytic activity">
    <reaction evidence="1">
        <text>glycerol + ATP = sn-glycerol 3-phosphate + ADP + H(+)</text>
        <dbReference type="Rhea" id="RHEA:21644"/>
        <dbReference type="ChEBI" id="CHEBI:15378"/>
        <dbReference type="ChEBI" id="CHEBI:17754"/>
        <dbReference type="ChEBI" id="CHEBI:30616"/>
        <dbReference type="ChEBI" id="CHEBI:57597"/>
        <dbReference type="ChEBI" id="CHEBI:456216"/>
        <dbReference type="EC" id="2.7.1.30"/>
    </reaction>
</comment>
<comment type="activity regulation">
    <text evidence="1">Activity of this regulatory enzyme is affected by several metabolites. Allosterically and non-competitively inhibited by fructose 1,6-bisphosphate (FBP) and unphosphorylated phosphocarrier protein EIIA-Glc (III-Glc), an integral component of the bacterial phosphotransferase (PTS) system.</text>
</comment>
<comment type="pathway">
    <text evidence="1">Polyol metabolism; glycerol degradation via glycerol kinase pathway; sn-glycerol 3-phosphate from glycerol: step 1/1.</text>
</comment>
<comment type="subunit">
    <text evidence="1">Homotetramer and homodimer (in equilibrium). Heterodimer with EIIA-Glc. Binds 1 zinc ion per glycerol kinase EIIA-Glc dimer. The zinc ion is important for dimerization.</text>
</comment>
<comment type="similarity">
    <text evidence="1">Belongs to the FGGY kinase family.</text>
</comment>
<reference key="1">
    <citation type="journal article" date="2008" name="J. Bacteriol.">
        <title>The pangenome structure of Escherichia coli: comparative genomic analysis of E. coli commensal and pathogenic isolates.</title>
        <authorList>
            <person name="Rasko D.A."/>
            <person name="Rosovitz M.J."/>
            <person name="Myers G.S.A."/>
            <person name="Mongodin E.F."/>
            <person name="Fricke W.F."/>
            <person name="Gajer P."/>
            <person name="Crabtree J."/>
            <person name="Sebaihia M."/>
            <person name="Thomson N.R."/>
            <person name="Chaudhuri R."/>
            <person name="Henderson I.R."/>
            <person name="Sperandio V."/>
            <person name="Ravel J."/>
        </authorList>
    </citation>
    <scope>NUCLEOTIDE SEQUENCE [LARGE SCALE GENOMIC DNA]</scope>
    <source>
        <strain>HS</strain>
    </source>
</reference>
<organism>
    <name type="scientific">Escherichia coli O9:H4 (strain HS)</name>
    <dbReference type="NCBI Taxonomy" id="331112"/>
    <lineage>
        <taxon>Bacteria</taxon>
        <taxon>Pseudomonadati</taxon>
        <taxon>Pseudomonadota</taxon>
        <taxon>Gammaproteobacteria</taxon>
        <taxon>Enterobacterales</taxon>
        <taxon>Enterobacteriaceae</taxon>
        <taxon>Escherichia</taxon>
    </lineage>
</organism>
<protein>
    <recommendedName>
        <fullName evidence="1">Glycerol kinase</fullName>
        <ecNumber evidence="1">2.7.1.30</ecNumber>
    </recommendedName>
    <alternativeName>
        <fullName evidence="1">ATP:glycerol 3-phosphotransferase</fullName>
    </alternativeName>
    <alternativeName>
        <fullName evidence="1">Glycerokinase</fullName>
        <shortName evidence="1">GK</shortName>
    </alternativeName>
</protein>
<dbReference type="EC" id="2.7.1.30" evidence="1"/>
<dbReference type="EMBL" id="CP000802">
    <property type="protein sequence ID" value="ABV08335.1"/>
    <property type="molecule type" value="Genomic_DNA"/>
</dbReference>
<dbReference type="RefSeq" id="WP_000136788.1">
    <property type="nucleotide sequence ID" value="NC_009800.1"/>
</dbReference>
<dbReference type="SMR" id="A8A731"/>
<dbReference type="GeneID" id="75169366"/>
<dbReference type="KEGG" id="ecx:EcHS_A4157"/>
<dbReference type="HOGENOM" id="CLU_009281_2_3_6"/>
<dbReference type="UniPathway" id="UPA00618">
    <property type="reaction ID" value="UER00672"/>
</dbReference>
<dbReference type="GO" id="GO:0005829">
    <property type="term" value="C:cytosol"/>
    <property type="evidence" value="ECO:0007669"/>
    <property type="project" value="TreeGrafter"/>
</dbReference>
<dbReference type="GO" id="GO:0005524">
    <property type="term" value="F:ATP binding"/>
    <property type="evidence" value="ECO:0007669"/>
    <property type="project" value="UniProtKB-UniRule"/>
</dbReference>
<dbReference type="GO" id="GO:0004370">
    <property type="term" value="F:glycerol kinase activity"/>
    <property type="evidence" value="ECO:0000250"/>
    <property type="project" value="UniProtKB"/>
</dbReference>
<dbReference type="GO" id="GO:0046872">
    <property type="term" value="F:metal ion binding"/>
    <property type="evidence" value="ECO:0007669"/>
    <property type="project" value="UniProtKB-KW"/>
</dbReference>
<dbReference type="GO" id="GO:0019563">
    <property type="term" value="P:glycerol catabolic process"/>
    <property type="evidence" value="ECO:0007669"/>
    <property type="project" value="UniProtKB-UniRule"/>
</dbReference>
<dbReference type="GO" id="GO:0006071">
    <property type="term" value="P:glycerol metabolic process"/>
    <property type="evidence" value="ECO:0000250"/>
    <property type="project" value="UniProtKB"/>
</dbReference>
<dbReference type="GO" id="GO:0006072">
    <property type="term" value="P:glycerol-3-phosphate metabolic process"/>
    <property type="evidence" value="ECO:0007669"/>
    <property type="project" value="InterPro"/>
</dbReference>
<dbReference type="CDD" id="cd07786">
    <property type="entry name" value="FGGY_EcGK_like"/>
    <property type="match status" value="1"/>
</dbReference>
<dbReference type="FunFam" id="3.30.420.40:FF:000007">
    <property type="entry name" value="Glycerol kinase"/>
    <property type="match status" value="1"/>
</dbReference>
<dbReference type="FunFam" id="3.30.420.40:FF:000008">
    <property type="entry name" value="Glycerol kinase"/>
    <property type="match status" value="1"/>
</dbReference>
<dbReference type="Gene3D" id="3.30.420.40">
    <property type="match status" value="2"/>
</dbReference>
<dbReference type="HAMAP" id="MF_00186">
    <property type="entry name" value="Glycerol_kin"/>
    <property type="match status" value="1"/>
</dbReference>
<dbReference type="InterPro" id="IPR043129">
    <property type="entry name" value="ATPase_NBD"/>
</dbReference>
<dbReference type="InterPro" id="IPR000577">
    <property type="entry name" value="Carb_kinase_FGGY"/>
</dbReference>
<dbReference type="InterPro" id="IPR018483">
    <property type="entry name" value="Carb_kinase_FGGY_CS"/>
</dbReference>
<dbReference type="InterPro" id="IPR018485">
    <property type="entry name" value="FGGY_C"/>
</dbReference>
<dbReference type="InterPro" id="IPR018484">
    <property type="entry name" value="FGGY_N"/>
</dbReference>
<dbReference type="InterPro" id="IPR005999">
    <property type="entry name" value="Glycerol_kin"/>
</dbReference>
<dbReference type="NCBIfam" id="TIGR01311">
    <property type="entry name" value="glycerol_kin"/>
    <property type="match status" value="1"/>
</dbReference>
<dbReference type="NCBIfam" id="NF000756">
    <property type="entry name" value="PRK00047.1"/>
    <property type="match status" value="1"/>
</dbReference>
<dbReference type="PANTHER" id="PTHR10196:SF69">
    <property type="entry name" value="GLYCEROL KINASE"/>
    <property type="match status" value="1"/>
</dbReference>
<dbReference type="PANTHER" id="PTHR10196">
    <property type="entry name" value="SUGAR KINASE"/>
    <property type="match status" value="1"/>
</dbReference>
<dbReference type="Pfam" id="PF02782">
    <property type="entry name" value="FGGY_C"/>
    <property type="match status" value="1"/>
</dbReference>
<dbReference type="Pfam" id="PF00370">
    <property type="entry name" value="FGGY_N"/>
    <property type="match status" value="1"/>
</dbReference>
<dbReference type="PIRSF" id="PIRSF000538">
    <property type="entry name" value="GlpK"/>
    <property type="match status" value="1"/>
</dbReference>
<dbReference type="SUPFAM" id="SSF53067">
    <property type="entry name" value="Actin-like ATPase domain"/>
    <property type="match status" value="2"/>
</dbReference>
<dbReference type="PROSITE" id="PS00933">
    <property type="entry name" value="FGGY_KINASES_1"/>
    <property type="match status" value="1"/>
</dbReference>
<dbReference type="PROSITE" id="PS00445">
    <property type="entry name" value="FGGY_KINASES_2"/>
    <property type="match status" value="1"/>
</dbReference>
<gene>
    <name evidence="1" type="primary">glpK</name>
    <name type="ordered locus">EcHS_A4157</name>
</gene>
<proteinExistence type="inferred from homology"/>
<name>GLPK_ECOHS</name>
<sequence>MTEKKYIVALDQGTTSSRAVVMDHDANIISVSQREFEQIYPKPGWVEHDPMEIWATQSSTLVEVLAKADISSDQIAAIGITNQRETTIVWEKETGKPIYNAIVWQCRRTAEICEHLKRDGLEDYIRSNTGLVIDPYFSGTKVKWILDHVEGSRERARRGELLFGTVDTWLIWKMTQGRVHVTDYTNASRTMLFNIHTLDWDDKMLEVLDIPREMLPEVRRSSEVYGQTNIGGKGGTRIPISGIAGDQQAALFGQLCVKEGMAKNTYGTGCFMLMNTGEKAVKSENGLLTTIACGPTGEVNYALEGAVFMAGASIQWLRDEMKLINDAYDSEYFATKVQNTNGVYVVPAFTGLGAPYWDPYARGAIFGLTRGVNANHIIRATLESIAYQTRDVLEAMQADSGIRLHALRVDGGAVANNFLMQFQSDILGTRVERPEVREVTALGAAYLAGLAVGFWQNLDELQEKAVIEREFRPGIETTERNYRYAGWKKAVKRAMAWEEHDE</sequence>
<feature type="chain" id="PRO_1000058445" description="Glycerol kinase">
    <location>
        <begin position="1"/>
        <end position="502"/>
    </location>
</feature>
<feature type="binding site" evidence="1">
    <location>
        <position position="14"/>
    </location>
    <ligand>
        <name>ADP</name>
        <dbReference type="ChEBI" id="CHEBI:456216"/>
    </ligand>
</feature>
<feature type="binding site" evidence="1">
    <location>
        <position position="14"/>
    </location>
    <ligand>
        <name>ATP</name>
        <dbReference type="ChEBI" id="CHEBI:30616"/>
    </ligand>
</feature>
<feature type="binding site" evidence="1">
    <location>
        <position position="14"/>
    </location>
    <ligand>
        <name>sn-glycerol 3-phosphate</name>
        <dbReference type="ChEBI" id="CHEBI:57597"/>
    </ligand>
</feature>
<feature type="binding site" evidence="1">
    <location>
        <position position="15"/>
    </location>
    <ligand>
        <name>ATP</name>
        <dbReference type="ChEBI" id="CHEBI:30616"/>
    </ligand>
</feature>
<feature type="binding site" evidence="1">
    <location>
        <position position="16"/>
    </location>
    <ligand>
        <name>ATP</name>
        <dbReference type="ChEBI" id="CHEBI:30616"/>
    </ligand>
</feature>
<feature type="binding site" evidence="1">
    <location>
        <position position="18"/>
    </location>
    <ligand>
        <name>ADP</name>
        <dbReference type="ChEBI" id="CHEBI:456216"/>
    </ligand>
</feature>
<feature type="binding site" evidence="1">
    <location>
        <position position="84"/>
    </location>
    <ligand>
        <name>glycerol</name>
        <dbReference type="ChEBI" id="CHEBI:17754"/>
    </ligand>
</feature>
<feature type="binding site" evidence="1">
    <location>
        <position position="84"/>
    </location>
    <ligand>
        <name>sn-glycerol 3-phosphate</name>
        <dbReference type="ChEBI" id="CHEBI:57597"/>
    </ligand>
</feature>
<feature type="binding site" evidence="1">
    <location>
        <position position="85"/>
    </location>
    <ligand>
        <name>glycerol</name>
        <dbReference type="ChEBI" id="CHEBI:17754"/>
    </ligand>
</feature>
<feature type="binding site" evidence="1">
    <location>
        <position position="85"/>
    </location>
    <ligand>
        <name>sn-glycerol 3-phosphate</name>
        <dbReference type="ChEBI" id="CHEBI:57597"/>
    </ligand>
</feature>
<feature type="binding site" evidence="1">
    <location>
        <position position="136"/>
    </location>
    <ligand>
        <name>glycerol</name>
        <dbReference type="ChEBI" id="CHEBI:17754"/>
    </ligand>
</feature>
<feature type="binding site" evidence="1">
    <location>
        <position position="136"/>
    </location>
    <ligand>
        <name>sn-glycerol 3-phosphate</name>
        <dbReference type="ChEBI" id="CHEBI:57597"/>
    </ligand>
</feature>
<feature type="binding site" evidence="1">
    <location>
        <position position="246"/>
    </location>
    <ligand>
        <name>glycerol</name>
        <dbReference type="ChEBI" id="CHEBI:17754"/>
    </ligand>
</feature>
<feature type="binding site" evidence="1">
    <location>
        <position position="246"/>
    </location>
    <ligand>
        <name>sn-glycerol 3-phosphate</name>
        <dbReference type="ChEBI" id="CHEBI:57597"/>
    </ligand>
</feature>
<feature type="binding site" evidence="1">
    <location>
        <position position="247"/>
    </location>
    <ligand>
        <name>glycerol</name>
        <dbReference type="ChEBI" id="CHEBI:17754"/>
    </ligand>
</feature>
<feature type="binding site" evidence="1">
    <location>
        <position position="268"/>
    </location>
    <ligand>
        <name>ADP</name>
        <dbReference type="ChEBI" id="CHEBI:456216"/>
    </ligand>
</feature>
<feature type="binding site" evidence="1">
    <location>
        <position position="268"/>
    </location>
    <ligand>
        <name>ATP</name>
        <dbReference type="ChEBI" id="CHEBI:30616"/>
    </ligand>
</feature>
<feature type="binding site" evidence="1">
    <location>
        <position position="311"/>
    </location>
    <ligand>
        <name>ADP</name>
        <dbReference type="ChEBI" id="CHEBI:456216"/>
    </ligand>
</feature>
<feature type="binding site" evidence="1">
    <location>
        <position position="311"/>
    </location>
    <ligand>
        <name>ATP</name>
        <dbReference type="ChEBI" id="CHEBI:30616"/>
    </ligand>
</feature>
<feature type="binding site" evidence="1">
    <location>
        <position position="315"/>
    </location>
    <ligand>
        <name>ATP</name>
        <dbReference type="ChEBI" id="CHEBI:30616"/>
    </ligand>
</feature>
<feature type="binding site" evidence="1">
    <location>
        <position position="412"/>
    </location>
    <ligand>
        <name>ADP</name>
        <dbReference type="ChEBI" id="CHEBI:456216"/>
    </ligand>
</feature>
<feature type="binding site" evidence="1">
    <location>
        <position position="412"/>
    </location>
    <ligand>
        <name>ATP</name>
        <dbReference type="ChEBI" id="CHEBI:30616"/>
    </ligand>
</feature>
<feature type="binding site" evidence="1">
    <location>
        <position position="416"/>
    </location>
    <ligand>
        <name>ADP</name>
        <dbReference type="ChEBI" id="CHEBI:456216"/>
    </ligand>
</feature>
<keyword id="KW-0021">Allosteric enzyme</keyword>
<keyword id="KW-0067">ATP-binding</keyword>
<keyword id="KW-0319">Glycerol metabolism</keyword>
<keyword id="KW-0418">Kinase</keyword>
<keyword id="KW-0479">Metal-binding</keyword>
<keyword id="KW-0547">Nucleotide-binding</keyword>
<keyword id="KW-0808">Transferase</keyword>
<keyword id="KW-0862">Zinc</keyword>